<reference key="1">
    <citation type="submission" date="1997-11" db="EMBL/GenBank/DDBJ databases">
        <title>Nucleotide sequence of the 300-304 chromosomal segment of Bacillus subtilis.</title>
        <authorList>
            <person name="Lazarevic V."/>
            <person name="Soldo B."/>
            <person name="Rivolta C."/>
            <person name="Reynolds S."/>
            <person name="Mauel C."/>
            <person name="Karamata D."/>
        </authorList>
    </citation>
    <scope>NUCLEOTIDE SEQUENCE [GENOMIC DNA]</scope>
</reference>
<reference key="2">
    <citation type="journal article" date="1997" name="Nature">
        <title>The complete genome sequence of the Gram-positive bacterium Bacillus subtilis.</title>
        <authorList>
            <person name="Kunst F."/>
            <person name="Ogasawara N."/>
            <person name="Moszer I."/>
            <person name="Albertini A.M."/>
            <person name="Alloni G."/>
            <person name="Azevedo V."/>
            <person name="Bertero M.G."/>
            <person name="Bessieres P."/>
            <person name="Bolotin A."/>
            <person name="Borchert S."/>
            <person name="Borriss R."/>
            <person name="Boursier L."/>
            <person name="Brans A."/>
            <person name="Braun M."/>
            <person name="Brignell S.C."/>
            <person name="Bron S."/>
            <person name="Brouillet S."/>
            <person name="Bruschi C.V."/>
            <person name="Caldwell B."/>
            <person name="Capuano V."/>
            <person name="Carter N.M."/>
            <person name="Choi S.-K."/>
            <person name="Codani J.-J."/>
            <person name="Connerton I.F."/>
            <person name="Cummings N.J."/>
            <person name="Daniel R.A."/>
            <person name="Denizot F."/>
            <person name="Devine K.M."/>
            <person name="Duesterhoeft A."/>
            <person name="Ehrlich S.D."/>
            <person name="Emmerson P.T."/>
            <person name="Entian K.-D."/>
            <person name="Errington J."/>
            <person name="Fabret C."/>
            <person name="Ferrari E."/>
            <person name="Foulger D."/>
            <person name="Fritz C."/>
            <person name="Fujita M."/>
            <person name="Fujita Y."/>
            <person name="Fuma S."/>
            <person name="Galizzi A."/>
            <person name="Galleron N."/>
            <person name="Ghim S.-Y."/>
            <person name="Glaser P."/>
            <person name="Goffeau A."/>
            <person name="Golightly E.J."/>
            <person name="Grandi G."/>
            <person name="Guiseppi G."/>
            <person name="Guy B.J."/>
            <person name="Haga K."/>
            <person name="Haiech J."/>
            <person name="Harwood C.R."/>
            <person name="Henaut A."/>
            <person name="Hilbert H."/>
            <person name="Holsappel S."/>
            <person name="Hosono S."/>
            <person name="Hullo M.-F."/>
            <person name="Itaya M."/>
            <person name="Jones L.-M."/>
            <person name="Joris B."/>
            <person name="Karamata D."/>
            <person name="Kasahara Y."/>
            <person name="Klaerr-Blanchard M."/>
            <person name="Klein C."/>
            <person name="Kobayashi Y."/>
            <person name="Koetter P."/>
            <person name="Koningstein G."/>
            <person name="Krogh S."/>
            <person name="Kumano M."/>
            <person name="Kurita K."/>
            <person name="Lapidus A."/>
            <person name="Lardinois S."/>
            <person name="Lauber J."/>
            <person name="Lazarevic V."/>
            <person name="Lee S.-M."/>
            <person name="Levine A."/>
            <person name="Liu H."/>
            <person name="Masuda S."/>
            <person name="Mauel C."/>
            <person name="Medigue C."/>
            <person name="Medina N."/>
            <person name="Mellado R.P."/>
            <person name="Mizuno M."/>
            <person name="Moestl D."/>
            <person name="Nakai S."/>
            <person name="Noback M."/>
            <person name="Noone D."/>
            <person name="O'Reilly M."/>
            <person name="Ogawa K."/>
            <person name="Ogiwara A."/>
            <person name="Oudega B."/>
            <person name="Park S.-H."/>
            <person name="Parro V."/>
            <person name="Pohl T.M."/>
            <person name="Portetelle D."/>
            <person name="Porwollik S."/>
            <person name="Prescott A.M."/>
            <person name="Presecan E."/>
            <person name="Pujic P."/>
            <person name="Purnelle B."/>
            <person name="Rapoport G."/>
            <person name="Rey M."/>
            <person name="Reynolds S."/>
            <person name="Rieger M."/>
            <person name="Rivolta C."/>
            <person name="Rocha E."/>
            <person name="Roche B."/>
            <person name="Rose M."/>
            <person name="Sadaie Y."/>
            <person name="Sato T."/>
            <person name="Scanlan E."/>
            <person name="Schleich S."/>
            <person name="Schroeter R."/>
            <person name="Scoffone F."/>
            <person name="Sekiguchi J."/>
            <person name="Sekowska A."/>
            <person name="Seror S.J."/>
            <person name="Serror P."/>
            <person name="Shin B.-S."/>
            <person name="Soldo B."/>
            <person name="Sorokin A."/>
            <person name="Tacconi E."/>
            <person name="Takagi T."/>
            <person name="Takahashi H."/>
            <person name="Takemaru K."/>
            <person name="Takeuchi M."/>
            <person name="Tamakoshi A."/>
            <person name="Tanaka T."/>
            <person name="Terpstra P."/>
            <person name="Tognoni A."/>
            <person name="Tosato V."/>
            <person name="Uchiyama S."/>
            <person name="Vandenbol M."/>
            <person name="Vannier F."/>
            <person name="Vassarotti A."/>
            <person name="Viari A."/>
            <person name="Wambutt R."/>
            <person name="Wedler E."/>
            <person name="Wedler H."/>
            <person name="Weitzenegger T."/>
            <person name="Winters P."/>
            <person name="Wipat A."/>
            <person name="Yamamoto H."/>
            <person name="Yamane K."/>
            <person name="Yasumoto K."/>
            <person name="Yata K."/>
            <person name="Yoshida K."/>
            <person name="Yoshikawa H.-F."/>
            <person name="Zumstein E."/>
            <person name="Yoshikawa H."/>
            <person name="Danchin A."/>
        </authorList>
    </citation>
    <scope>NUCLEOTIDE SEQUENCE [LARGE SCALE GENOMIC DNA]</scope>
    <source>
        <strain>168</strain>
    </source>
</reference>
<evidence type="ECO:0000255" key="1"/>
<proteinExistence type="inferred from homology"/>
<protein>
    <recommendedName>
        <fullName>Uncharacterized protein YvpB</fullName>
    </recommendedName>
</protein>
<accession>O34735</accession>
<accession>Q795F3</accession>
<sequence>MKTLRTLCVLMILSGVIFFGLKIDAKDIDIPFLNSLKKVVSDSDTDSAANSKKELKGSAKPLDVILYNQMDAPRLYNGCEVTSLAMVLNYAGYDVTKNTLANQVATVPLTYSSGLKGDPNDGFVGDMANGPGLGVYHRPIYQLAKTYAGDKVSDLTGKSISAVYQQLEKGNPVWVITTANFTPVDNMQTWKTPNGTIEITYSEHSVAVTGYDDKYVYLNDPYGYKNRKTDRTSFEKAWKQMGSQAVVIQK</sequence>
<keyword id="KW-1185">Reference proteome</keyword>
<keyword id="KW-0732">Signal</keyword>
<dbReference type="EMBL" id="AF017113">
    <property type="protein sequence ID" value="AAC67292.1"/>
    <property type="molecule type" value="Genomic_DNA"/>
</dbReference>
<dbReference type="EMBL" id="AL009126">
    <property type="protein sequence ID" value="CAB15499.1"/>
    <property type="molecule type" value="Genomic_DNA"/>
</dbReference>
<dbReference type="PIR" id="B70045">
    <property type="entry name" value="B70045"/>
</dbReference>
<dbReference type="RefSeq" id="NP_391374.1">
    <property type="nucleotide sequence ID" value="NC_000964.3"/>
</dbReference>
<dbReference type="RefSeq" id="WP_003243552.1">
    <property type="nucleotide sequence ID" value="NZ_OZ025638.1"/>
</dbReference>
<dbReference type="SMR" id="O34735"/>
<dbReference type="FunCoup" id="O34735">
    <property type="interactions" value="10"/>
</dbReference>
<dbReference type="STRING" id="224308.BSU34940"/>
<dbReference type="PaxDb" id="224308-BSU34940"/>
<dbReference type="DNASU" id="936591"/>
<dbReference type="EnsemblBacteria" id="CAB15499">
    <property type="protein sequence ID" value="CAB15499"/>
    <property type="gene ID" value="BSU_34940"/>
</dbReference>
<dbReference type="GeneID" id="936591"/>
<dbReference type="KEGG" id="bsu:BSU34940"/>
<dbReference type="PATRIC" id="fig|224308.179.peg.3782"/>
<dbReference type="eggNOG" id="COG4990">
    <property type="taxonomic scope" value="Bacteria"/>
</dbReference>
<dbReference type="InParanoid" id="O34735"/>
<dbReference type="OrthoDB" id="1164310at2"/>
<dbReference type="PhylomeDB" id="O34735"/>
<dbReference type="BioCyc" id="BSUB:BSU34940-MONOMER"/>
<dbReference type="Proteomes" id="UP000001570">
    <property type="component" value="Chromosome"/>
</dbReference>
<dbReference type="CDD" id="cd02549">
    <property type="entry name" value="Peptidase_C39A"/>
    <property type="match status" value="1"/>
</dbReference>
<dbReference type="Gene3D" id="3.90.70.10">
    <property type="entry name" value="Cysteine proteinases"/>
    <property type="match status" value="1"/>
</dbReference>
<dbReference type="InterPro" id="IPR039564">
    <property type="entry name" value="Peptidase_C39-like"/>
</dbReference>
<dbReference type="InterPro" id="IPR039563">
    <property type="entry name" value="Peptidase_C39_single_dom"/>
</dbReference>
<dbReference type="InterPro" id="IPR016997">
    <property type="entry name" value="UCP032442"/>
</dbReference>
<dbReference type="PANTHER" id="PTHR37806">
    <property type="entry name" value="LMO0724 PROTEIN"/>
    <property type="match status" value="1"/>
</dbReference>
<dbReference type="PANTHER" id="PTHR37806:SF1">
    <property type="entry name" value="PEPTIDASE C39-LIKE DOMAIN-CONTAINING PROTEIN"/>
    <property type="match status" value="1"/>
</dbReference>
<dbReference type="Pfam" id="PF13529">
    <property type="entry name" value="Peptidase_C39_2"/>
    <property type="match status" value="1"/>
</dbReference>
<dbReference type="PIRSF" id="PIRSF032442">
    <property type="entry name" value="UCP032442"/>
    <property type="match status" value="1"/>
</dbReference>
<gene>
    <name type="primary">yvpB</name>
    <name type="ordered locus">BSU34940</name>
</gene>
<feature type="signal peptide" evidence="1">
    <location>
        <begin position="1"/>
        <end position="25"/>
    </location>
</feature>
<feature type="chain" id="PRO_0000388801" description="Uncharacterized protein YvpB">
    <location>
        <begin position="26"/>
        <end position="250"/>
    </location>
</feature>
<organism>
    <name type="scientific">Bacillus subtilis (strain 168)</name>
    <dbReference type="NCBI Taxonomy" id="224308"/>
    <lineage>
        <taxon>Bacteria</taxon>
        <taxon>Bacillati</taxon>
        <taxon>Bacillota</taxon>
        <taxon>Bacilli</taxon>
        <taxon>Bacillales</taxon>
        <taxon>Bacillaceae</taxon>
        <taxon>Bacillus</taxon>
    </lineage>
</organism>
<name>YVPB_BACSU</name>